<proteinExistence type="inferred from homology"/>
<reference key="1">
    <citation type="submission" date="2006-12" db="EMBL/GenBank/DDBJ databases">
        <authorList>
            <person name="Fouts D.E."/>
            <person name="Nelson K.E."/>
            <person name="Sebastian Y."/>
        </authorList>
    </citation>
    <scope>NUCLEOTIDE SEQUENCE [LARGE SCALE GENOMIC DNA]</scope>
    <source>
        <strain>81-176</strain>
    </source>
</reference>
<comment type="function">
    <text evidence="1">Catalyzes the conversion of 1-hydroxy-2-methyl-2-(E)-butenyl 4-diphosphate (HMBPP) into a mixture of isopentenyl diphosphate (IPP) and dimethylallyl diphosphate (DMAPP). Acts in the terminal step of the DOXP/MEP pathway for isoprenoid precursor biosynthesis.</text>
</comment>
<comment type="catalytic activity">
    <reaction evidence="1">
        <text>isopentenyl diphosphate + 2 oxidized [2Fe-2S]-[ferredoxin] + H2O = (2E)-4-hydroxy-3-methylbut-2-enyl diphosphate + 2 reduced [2Fe-2S]-[ferredoxin] + 2 H(+)</text>
        <dbReference type="Rhea" id="RHEA:24488"/>
        <dbReference type="Rhea" id="RHEA-COMP:10000"/>
        <dbReference type="Rhea" id="RHEA-COMP:10001"/>
        <dbReference type="ChEBI" id="CHEBI:15377"/>
        <dbReference type="ChEBI" id="CHEBI:15378"/>
        <dbReference type="ChEBI" id="CHEBI:33737"/>
        <dbReference type="ChEBI" id="CHEBI:33738"/>
        <dbReference type="ChEBI" id="CHEBI:128753"/>
        <dbReference type="ChEBI" id="CHEBI:128769"/>
        <dbReference type="EC" id="1.17.7.4"/>
    </reaction>
</comment>
<comment type="catalytic activity">
    <reaction evidence="1">
        <text>dimethylallyl diphosphate + 2 oxidized [2Fe-2S]-[ferredoxin] + H2O = (2E)-4-hydroxy-3-methylbut-2-enyl diphosphate + 2 reduced [2Fe-2S]-[ferredoxin] + 2 H(+)</text>
        <dbReference type="Rhea" id="RHEA:24825"/>
        <dbReference type="Rhea" id="RHEA-COMP:10000"/>
        <dbReference type="Rhea" id="RHEA-COMP:10001"/>
        <dbReference type="ChEBI" id="CHEBI:15377"/>
        <dbReference type="ChEBI" id="CHEBI:15378"/>
        <dbReference type="ChEBI" id="CHEBI:33737"/>
        <dbReference type="ChEBI" id="CHEBI:33738"/>
        <dbReference type="ChEBI" id="CHEBI:57623"/>
        <dbReference type="ChEBI" id="CHEBI:128753"/>
        <dbReference type="EC" id="1.17.7.4"/>
    </reaction>
</comment>
<comment type="cofactor">
    <cofactor evidence="1">
        <name>[4Fe-4S] cluster</name>
        <dbReference type="ChEBI" id="CHEBI:49883"/>
    </cofactor>
    <text evidence="1">Binds 1 [4Fe-4S] cluster per subunit.</text>
</comment>
<comment type="pathway">
    <text evidence="1">Isoprenoid biosynthesis; dimethylallyl diphosphate biosynthesis; dimethylallyl diphosphate from (2E)-4-hydroxy-3-methylbutenyl diphosphate: step 1/1.</text>
</comment>
<comment type="pathway">
    <text evidence="1">Isoprenoid biosynthesis; isopentenyl diphosphate biosynthesis via DXP pathway; isopentenyl diphosphate from 1-deoxy-D-xylulose 5-phosphate: step 6/6.</text>
</comment>
<comment type="similarity">
    <text evidence="1">Belongs to the IspH family.</text>
</comment>
<protein>
    <recommendedName>
        <fullName evidence="1">4-hydroxy-3-methylbut-2-enyl diphosphate reductase</fullName>
        <shortName evidence="1">HMBPP reductase</shortName>
        <ecNumber evidence="1">1.17.7.4</ecNumber>
    </recommendedName>
</protein>
<accession>A1VZM8</accession>
<evidence type="ECO:0000255" key="1">
    <source>
        <dbReference type="HAMAP-Rule" id="MF_00191"/>
    </source>
</evidence>
<name>ISPH_CAMJJ</name>
<dbReference type="EC" id="1.17.7.4" evidence="1"/>
<dbReference type="EMBL" id="CP000538">
    <property type="protein sequence ID" value="EAQ72333.1"/>
    <property type="molecule type" value="Genomic_DNA"/>
</dbReference>
<dbReference type="RefSeq" id="WP_002867459.1">
    <property type="nucleotide sequence ID" value="NC_008787.1"/>
</dbReference>
<dbReference type="SMR" id="A1VZM8"/>
<dbReference type="KEGG" id="cjj:CJJ81176_0903"/>
<dbReference type="eggNOG" id="COG0761">
    <property type="taxonomic scope" value="Bacteria"/>
</dbReference>
<dbReference type="HOGENOM" id="CLU_027486_0_1_7"/>
<dbReference type="UniPathway" id="UPA00056">
    <property type="reaction ID" value="UER00097"/>
</dbReference>
<dbReference type="UniPathway" id="UPA00059">
    <property type="reaction ID" value="UER00105"/>
</dbReference>
<dbReference type="Proteomes" id="UP000000646">
    <property type="component" value="Chromosome"/>
</dbReference>
<dbReference type="GO" id="GO:0051539">
    <property type="term" value="F:4 iron, 4 sulfur cluster binding"/>
    <property type="evidence" value="ECO:0007669"/>
    <property type="project" value="UniProtKB-UniRule"/>
</dbReference>
<dbReference type="GO" id="GO:0051745">
    <property type="term" value="F:4-hydroxy-3-methylbut-2-enyl diphosphate reductase activity"/>
    <property type="evidence" value="ECO:0007669"/>
    <property type="project" value="UniProtKB-UniRule"/>
</dbReference>
<dbReference type="GO" id="GO:0046872">
    <property type="term" value="F:metal ion binding"/>
    <property type="evidence" value="ECO:0007669"/>
    <property type="project" value="UniProtKB-KW"/>
</dbReference>
<dbReference type="GO" id="GO:0050992">
    <property type="term" value="P:dimethylallyl diphosphate biosynthetic process"/>
    <property type="evidence" value="ECO:0007669"/>
    <property type="project" value="UniProtKB-UniRule"/>
</dbReference>
<dbReference type="GO" id="GO:0019288">
    <property type="term" value="P:isopentenyl diphosphate biosynthetic process, methylerythritol 4-phosphate pathway"/>
    <property type="evidence" value="ECO:0007669"/>
    <property type="project" value="UniProtKB-UniRule"/>
</dbReference>
<dbReference type="GO" id="GO:0016114">
    <property type="term" value="P:terpenoid biosynthetic process"/>
    <property type="evidence" value="ECO:0007669"/>
    <property type="project" value="UniProtKB-UniRule"/>
</dbReference>
<dbReference type="CDD" id="cd13944">
    <property type="entry name" value="lytB_ispH"/>
    <property type="match status" value="1"/>
</dbReference>
<dbReference type="Gene3D" id="3.40.50.11270">
    <property type="match status" value="1"/>
</dbReference>
<dbReference type="Gene3D" id="3.40.1010.20">
    <property type="entry name" value="4-hydroxy-3-methylbut-2-enyl diphosphate reductase, catalytic domain"/>
    <property type="match status" value="2"/>
</dbReference>
<dbReference type="HAMAP" id="MF_00191">
    <property type="entry name" value="IspH"/>
    <property type="match status" value="1"/>
</dbReference>
<dbReference type="InterPro" id="IPR003451">
    <property type="entry name" value="LytB/IspH"/>
</dbReference>
<dbReference type="NCBIfam" id="TIGR00216">
    <property type="entry name" value="ispH_lytB"/>
    <property type="match status" value="1"/>
</dbReference>
<dbReference type="NCBIfam" id="NF002187">
    <property type="entry name" value="PRK01045.1-1"/>
    <property type="match status" value="1"/>
</dbReference>
<dbReference type="PANTHER" id="PTHR30426">
    <property type="entry name" value="4-HYDROXY-3-METHYLBUT-2-ENYL DIPHOSPHATE REDUCTASE"/>
    <property type="match status" value="1"/>
</dbReference>
<dbReference type="PANTHER" id="PTHR30426:SF0">
    <property type="entry name" value="4-HYDROXY-3-METHYLBUT-2-ENYL DIPHOSPHATE REDUCTASE"/>
    <property type="match status" value="1"/>
</dbReference>
<dbReference type="Pfam" id="PF02401">
    <property type="entry name" value="LYTB"/>
    <property type="match status" value="1"/>
</dbReference>
<sequence>MIIELAKNYGFCFGVKRAIKKAEQIKDAATIGPLIHNNEEISRLQKNFNVKTLENIQALSNEKKAIIRTHGITKQDLEELRKKDIEIFDATCPFVTKPQQICEQMSKEGYEVVIFGDENHPEVKGVKSYVSTKAYVVLDKKELQNIKLPNKIAVVSQTTKKPEHFMEIVNFLILKTKEVRVFNTICDATFKNQDAIKELSLKSDVMVVVGGKNSANTKQLFLIAKTNCEDSYLIETEEELKKEWFLDKKHCGISAGASTPDWIIQKVIAKIKNFKIN</sequence>
<feature type="chain" id="PRO_1000021098" description="4-hydroxy-3-methylbut-2-enyl diphosphate reductase">
    <location>
        <begin position="1"/>
        <end position="277"/>
    </location>
</feature>
<feature type="active site" description="Proton donor" evidence="1">
    <location>
        <position position="122"/>
    </location>
</feature>
<feature type="binding site" evidence="1">
    <location>
        <position position="12"/>
    </location>
    <ligand>
        <name>[4Fe-4S] cluster</name>
        <dbReference type="ChEBI" id="CHEBI:49883"/>
    </ligand>
</feature>
<feature type="binding site" evidence="1">
    <location>
        <position position="36"/>
    </location>
    <ligand>
        <name>(2E)-4-hydroxy-3-methylbut-2-enyl diphosphate</name>
        <dbReference type="ChEBI" id="CHEBI:128753"/>
    </ligand>
</feature>
<feature type="binding site" evidence="1">
    <location>
        <position position="36"/>
    </location>
    <ligand>
        <name>dimethylallyl diphosphate</name>
        <dbReference type="ChEBI" id="CHEBI:57623"/>
    </ligand>
</feature>
<feature type="binding site" evidence="1">
    <location>
        <position position="36"/>
    </location>
    <ligand>
        <name>isopentenyl diphosphate</name>
        <dbReference type="ChEBI" id="CHEBI:128769"/>
    </ligand>
</feature>
<feature type="binding site" evidence="1">
    <location>
        <position position="70"/>
    </location>
    <ligand>
        <name>(2E)-4-hydroxy-3-methylbut-2-enyl diphosphate</name>
        <dbReference type="ChEBI" id="CHEBI:128753"/>
    </ligand>
</feature>
<feature type="binding site" evidence="1">
    <location>
        <position position="70"/>
    </location>
    <ligand>
        <name>dimethylallyl diphosphate</name>
        <dbReference type="ChEBI" id="CHEBI:57623"/>
    </ligand>
</feature>
<feature type="binding site" evidence="1">
    <location>
        <position position="70"/>
    </location>
    <ligand>
        <name>isopentenyl diphosphate</name>
        <dbReference type="ChEBI" id="CHEBI:128769"/>
    </ligand>
</feature>
<feature type="binding site" evidence="1">
    <location>
        <position position="92"/>
    </location>
    <ligand>
        <name>[4Fe-4S] cluster</name>
        <dbReference type="ChEBI" id="CHEBI:49883"/>
    </ligand>
</feature>
<feature type="binding site" evidence="1">
    <location>
        <position position="120"/>
    </location>
    <ligand>
        <name>(2E)-4-hydroxy-3-methylbut-2-enyl diphosphate</name>
        <dbReference type="ChEBI" id="CHEBI:128753"/>
    </ligand>
</feature>
<feature type="binding site" evidence="1">
    <location>
        <position position="120"/>
    </location>
    <ligand>
        <name>dimethylallyl diphosphate</name>
        <dbReference type="ChEBI" id="CHEBI:57623"/>
    </ligand>
</feature>
<feature type="binding site" evidence="1">
    <location>
        <position position="120"/>
    </location>
    <ligand>
        <name>isopentenyl diphosphate</name>
        <dbReference type="ChEBI" id="CHEBI:128769"/>
    </ligand>
</feature>
<feature type="binding site" evidence="1">
    <location>
        <position position="158"/>
    </location>
    <ligand>
        <name>(2E)-4-hydroxy-3-methylbut-2-enyl diphosphate</name>
        <dbReference type="ChEBI" id="CHEBI:128753"/>
    </ligand>
</feature>
<feature type="binding site" evidence="1">
    <location>
        <position position="186"/>
    </location>
    <ligand>
        <name>[4Fe-4S] cluster</name>
        <dbReference type="ChEBI" id="CHEBI:49883"/>
    </ligand>
</feature>
<feature type="binding site" evidence="1">
    <location>
        <position position="214"/>
    </location>
    <ligand>
        <name>(2E)-4-hydroxy-3-methylbut-2-enyl diphosphate</name>
        <dbReference type="ChEBI" id="CHEBI:128753"/>
    </ligand>
</feature>
<feature type="binding site" evidence="1">
    <location>
        <position position="214"/>
    </location>
    <ligand>
        <name>dimethylallyl diphosphate</name>
        <dbReference type="ChEBI" id="CHEBI:57623"/>
    </ligand>
</feature>
<feature type="binding site" evidence="1">
    <location>
        <position position="214"/>
    </location>
    <ligand>
        <name>isopentenyl diphosphate</name>
        <dbReference type="ChEBI" id="CHEBI:128769"/>
    </ligand>
</feature>
<feature type="binding site" evidence="1">
    <location>
        <position position="216"/>
    </location>
    <ligand>
        <name>(2E)-4-hydroxy-3-methylbut-2-enyl diphosphate</name>
        <dbReference type="ChEBI" id="CHEBI:128753"/>
    </ligand>
</feature>
<feature type="binding site" evidence="1">
    <location>
        <position position="216"/>
    </location>
    <ligand>
        <name>dimethylallyl diphosphate</name>
        <dbReference type="ChEBI" id="CHEBI:57623"/>
    </ligand>
</feature>
<feature type="binding site" evidence="1">
    <location>
        <position position="216"/>
    </location>
    <ligand>
        <name>isopentenyl diphosphate</name>
        <dbReference type="ChEBI" id="CHEBI:128769"/>
    </ligand>
</feature>
<feature type="binding site" evidence="1">
    <location>
        <position position="258"/>
    </location>
    <ligand>
        <name>(2E)-4-hydroxy-3-methylbut-2-enyl diphosphate</name>
        <dbReference type="ChEBI" id="CHEBI:128753"/>
    </ligand>
</feature>
<feature type="binding site" evidence="1">
    <location>
        <position position="258"/>
    </location>
    <ligand>
        <name>dimethylallyl diphosphate</name>
        <dbReference type="ChEBI" id="CHEBI:57623"/>
    </ligand>
</feature>
<feature type="binding site" evidence="1">
    <location>
        <position position="258"/>
    </location>
    <ligand>
        <name>isopentenyl diphosphate</name>
        <dbReference type="ChEBI" id="CHEBI:128769"/>
    </ligand>
</feature>
<keyword id="KW-0004">4Fe-4S</keyword>
<keyword id="KW-0408">Iron</keyword>
<keyword id="KW-0411">Iron-sulfur</keyword>
<keyword id="KW-0414">Isoprene biosynthesis</keyword>
<keyword id="KW-0479">Metal-binding</keyword>
<keyword id="KW-0560">Oxidoreductase</keyword>
<organism>
    <name type="scientific">Campylobacter jejuni subsp. jejuni serotype O:23/36 (strain 81-176)</name>
    <dbReference type="NCBI Taxonomy" id="354242"/>
    <lineage>
        <taxon>Bacteria</taxon>
        <taxon>Pseudomonadati</taxon>
        <taxon>Campylobacterota</taxon>
        <taxon>Epsilonproteobacteria</taxon>
        <taxon>Campylobacterales</taxon>
        <taxon>Campylobacteraceae</taxon>
        <taxon>Campylobacter</taxon>
    </lineage>
</organism>
<gene>
    <name evidence="1" type="primary">ispH</name>
    <name type="ordered locus">CJJ81176_0903</name>
</gene>